<accession>Q89WK4</accession>
<proteinExistence type="inferred from homology"/>
<keyword id="KW-0548">Nucleotidyltransferase</keyword>
<keyword id="KW-1185">Reference proteome</keyword>
<keyword id="KW-0694">RNA-binding</keyword>
<keyword id="KW-0698">rRNA processing</keyword>
<keyword id="KW-0808">Transferase</keyword>
<keyword id="KW-0819">tRNA processing</keyword>
<keyword id="KW-0820">tRNA-binding</keyword>
<gene>
    <name evidence="1" type="primary">rph</name>
    <name type="ordered locus">bll0674</name>
</gene>
<evidence type="ECO:0000255" key="1">
    <source>
        <dbReference type="HAMAP-Rule" id="MF_00564"/>
    </source>
</evidence>
<comment type="function">
    <text evidence="1">Phosphorolytic 3'-5' exoribonuclease that plays an important role in tRNA 3'-end maturation. Removes nucleotide residues following the 3'-CCA terminus of tRNAs; can also add nucleotides to the ends of RNA molecules by using nucleoside diphosphates as substrates, but this may not be physiologically important. Probably plays a role in initiation of 16S rRNA degradation (leading to ribosome degradation) during starvation.</text>
</comment>
<comment type="catalytic activity">
    <reaction evidence="1">
        <text>tRNA(n+1) + phosphate = tRNA(n) + a ribonucleoside 5'-diphosphate</text>
        <dbReference type="Rhea" id="RHEA:10628"/>
        <dbReference type="Rhea" id="RHEA-COMP:17343"/>
        <dbReference type="Rhea" id="RHEA-COMP:17344"/>
        <dbReference type="ChEBI" id="CHEBI:43474"/>
        <dbReference type="ChEBI" id="CHEBI:57930"/>
        <dbReference type="ChEBI" id="CHEBI:173114"/>
        <dbReference type="EC" id="2.7.7.56"/>
    </reaction>
</comment>
<comment type="subunit">
    <text evidence="1">Homohexameric ring arranged as a trimer of dimers.</text>
</comment>
<comment type="similarity">
    <text evidence="1">Belongs to the RNase PH family.</text>
</comment>
<reference key="1">
    <citation type="journal article" date="2002" name="DNA Res.">
        <title>Complete genomic sequence of nitrogen-fixing symbiotic bacterium Bradyrhizobium japonicum USDA110.</title>
        <authorList>
            <person name="Kaneko T."/>
            <person name="Nakamura Y."/>
            <person name="Sato S."/>
            <person name="Minamisawa K."/>
            <person name="Uchiumi T."/>
            <person name="Sasamoto S."/>
            <person name="Watanabe A."/>
            <person name="Idesawa K."/>
            <person name="Iriguchi M."/>
            <person name="Kawashima K."/>
            <person name="Kohara M."/>
            <person name="Matsumoto M."/>
            <person name="Shimpo S."/>
            <person name="Tsuruoka H."/>
            <person name="Wada T."/>
            <person name="Yamada M."/>
            <person name="Tabata S."/>
        </authorList>
    </citation>
    <scope>NUCLEOTIDE SEQUENCE [LARGE SCALE GENOMIC DNA]</scope>
    <source>
        <strain>JCM 10833 / BCRC 13528 / IAM 13628 / NBRC 14792 / USDA 110</strain>
    </source>
</reference>
<sequence length="237" mass="25912">MRPSRRAPDELRPVTLERGVVKYAEGSCLVKFGDTHVLVTATLEDRLPPWLKGQGRGWVTAEYGMLPRATSERTRREASAGKQSGRTVEIQRLIGRSLRTIINLEALGERQITVDCDVLQADGGTRTASITGAWVALADCVNWMKARNMVKANVLRDNVAAISCGIYNGTPVLDLDYAEDSEAQTDANFVMTGDGRIIEVQGTAEREPFTQDELLALMALAQKGIARLVDLQKLAVA</sequence>
<dbReference type="EC" id="2.7.7.56" evidence="1"/>
<dbReference type="EMBL" id="BA000040">
    <property type="protein sequence ID" value="BAC45939.1"/>
    <property type="molecule type" value="Genomic_DNA"/>
</dbReference>
<dbReference type="RefSeq" id="NP_767314.1">
    <property type="nucleotide sequence ID" value="NC_004463.1"/>
</dbReference>
<dbReference type="RefSeq" id="WP_011083501.1">
    <property type="nucleotide sequence ID" value="NC_004463.1"/>
</dbReference>
<dbReference type="SMR" id="Q89WK4"/>
<dbReference type="FunCoup" id="Q89WK4">
    <property type="interactions" value="556"/>
</dbReference>
<dbReference type="STRING" id="224911.AAV28_00205"/>
<dbReference type="EnsemblBacteria" id="BAC45939">
    <property type="protein sequence ID" value="BAC45939"/>
    <property type="gene ID" value="BAC45939"/>
</dbReference>
<dbReference type="GeneID" id="46487947"/>
<dbReference type="KEGG" id="bja:bll0674"/>
<dbReference type="PATRIC" id="fig|224911.44.peg.43"/>
<dbReference type="eggNOG" id="COG0689">
    <property type="taxonomic scope" value="Bacteria"/>
</dbReference>
<dbReference type="HOGENOM" id="CLU_050858_0_0_5"/>
<dbReference type="InParanoid" id="Q89WK4"/>
<dbReference type="OrthoDB" id="9802265at2"/>
<dbReference type="PhylomeDB" id="Q89WK4"/>
<dbReference type="Proteomes" id="UP000002526">
    <property type="component" value="Chromosome"/>
</dbReference>
<dbReference type="GO" id="GO:0000175">
    <property type="term" value="F:3'-5'-RNA exonuclease activity"/>
    <property type="evidence" value="ECO:0007669"/>
    <property type="project" value="UniProtKB-UniRule"/>
</dbReference>
<dbReference type="GO" id="GO:0003723">
    <property type="term" value="F:RNA binding"/>
    <property type="evidence" value="ECO:0000318"/>
    <property type="project" value="GO_Central"/>
</dbReference>
<dbReference type="GO" id="GO:0000049">
    <property type="term" value="F:tRNA binding"/>
    <property type="evidence" value="ECO:0007669"/>
    <property type="project" value="UniProtKB-UniRule"/>
</dbReference>
<dbReference type="GO" id="GO:0009022">
    <property type="term" value="F:tRNA nucleotidyltransferase activity"/>
    <property type="evidence" value="ECO:0007669"/>
    <property type="project" value="UniProtKB-UniRule"/>
</dbReference>
<dbReference type="GO" id="GO:0016075">
    <property type="term" value="P:rRNA catabolic process"/>
    <property type="evidence" value="ECO:0000318"/>
    <property type="project" value="GO_Central"/>
</dbReference>
<dbReference type="GO" id="GO:0006364">
    <property type="term" value="P:rRNA processing"/>
    <property type="evidence" value="ECO:0007669"/>
    <property type="project" value="UniProtKB-KW"/>
</dbReference>
<dbReference type="GO" id="GO:0008033">
    <property type="term" value="P:tRNA processing"/>
    <property type="evidence" value="ECO:0007669"/>
    <property type="project" value="UniProtKB-UniRule"/>
</dbReference>
<dbReference type="CDD" id="cd11362">
    <property type="entry name" value="RNase_PH_bact"/>
    <property type="match status" value="1"/>
</dbReference>
<dbReference type="FunFam" id="3.30.230.70:FF:000003">
    <property type="entry name" value="Ribonuclease PH"/>
    <property type="match status" value="1"/>
</dbReference>
<dbReference type="Gene3D" id="3.30.230.70">
    <property type="entry name" value="GHMP Kinase, N-terminal domain"/>
    <property type="match status" value="1"/>
</dbReference>
<dbReference type="HAMAP" id="MF_00564">
    <property type="entry name" value="RNase_PH"/>
    <property type="match status" value="1"/>
</dbReference>
<dbReference type="InterPro" id="IPR001247">
    <property type="entry name" value="ExoRNase_PH_dom1"/>
</dbReference>
<dbReference type="InterPro" id="IPR015847">
    <property type="entry name" value="ExoRNase_PH_dom2"/>
</dbReference>
<dbReference type="InterPro" id="IPR036345">
    <property type="entry name" value="ExoRNase_PH_dom2_sf"/>
</dbReference>
<dbReference type="InterPro" id="IPR027408">
    <property type="entry name" value="PNPase/RNase_PH_dom_sf"/>
</dbReference>
<dbReference type="InterPro" id="IPR020568">
    <property type="entry name" value="Ribosomal_Su5_D2-typ_SF"/>
</dbReference>
<dbReference type="InterPro" id="IPR050080">
    <property type="entry name" value="RNase_PH"/>
</dbReference>
<dbReference type="InterPro" id="IPR002381">
    <property type="entry name" value="RNase_PH_bac-type"/>
</dbReference>
<dbReference type="InterPro" id="IPR018336">
    <property type="entry name" value="RNase_PH_CS"/>
</dbReference>
<dbReference type="NCBIfam" id="TIGR01966">
    <property type="entry name" value="RNasePH"/>
    <property type="match status" value="1"/>
</dbReference>
<dbReference type="PANTHER" id="PTHR11953">
    <property type="entry name" value="EXOSOME COMPLEX COMPONENT"/>
    <property type="match status" value="1"/>
</dbReference>
<dbReference type="PANTHER" id="PTHR11953:SF0">
    <property type="entry name" value="EXOSOME COMPLEX COMPONENT RRP41"/>
    <property type="match status" value="1"/>
</dbReference>
<dbReference type="Pfam" id="PF01138">
    <property type="entry name" value="RNase_PH"/>
    <property type="match status" value="1"/>
</dbReference>
<dbReference type="Pfam" id="PF03725">
    <property type="entry name" value="RNase_PH_C"/>
    <property type="match status" value="1"/>
</dbReference>
<dbReference type="SUPFAM" id="SSF55666">
    <property type="entry name" value="Ribonuclease PH domain 2-like"/>
    <property type="match status" value="1"/>
</dbReference>
<dbReference type="SUPFAM" id="SSF54211">
    <property type="entry name" value="Ribosomal protein S5 domain 2-like"/>
    <property type="match status" value="1"/>
</dbReference>
<dbReference type="PROSITE" id="PS01277">
    <property type="entry name" value="RIBONUCLEASE_PH"/>
    <property type="match status" value="1"/>
</dbReference>
<organism>
    <name type="scientific">Bradyrhizobium diazoefficiens (strain JCM 10833 / BCRC 13528 / IAM 13628 / NBRC 14792 / USDA 110)</name>
    <dbReference type="NCBI Taxonomy" id="224911"/>
    <lineage>
        <taxon>Bacteria</taxon>
        <taxon>Pseudomonadati</taxon>
        <taxon>Pseudomonadota</taxon>
        <taxon>Alphaproteobacteria</taxon>
        <taxon>Hyphomicrobiales</taxon>
        <taxon>Nitrobacteraceae</taxon>
        <taxon>Bradyrhizobium</taxon>
    </lineage>
</organism>
<name>RNPH_BRADU</name>
<feature type="chain" id="PRO_0000139875" description="Ribonuclease PH">
    <location>
        <begin position="1"/>
        <end position="237"/>
    </location>
</feature>
<feature type="binding site" evidence="1">
    <location>
        <position position="86"/>
    </location>
    <ligand>
        <name>phosphate</name>
        <dbReference type="ChEBI" id="CHEBI:43474"/>
        <note>substrate</note>
    </ligand>
</feature>
<feature type="binding site" evidence="1">
    <location>
        <begin position="124"/>
        <end position="126"/>
    </location>
    <ligand>
        <name>phosphate</name>
        <dbReference type="ChEBI" id="CHEBI:43474"/>
        <note>substrate</note>
    </ligand>
</feature>
<protein>
    <recommendedName>
        <fullName evidence="1">Ribonuclease PH</fullName>
        <shortName evidence="1">RNase PH</shortName>
        <ecNumber evidence="1">2.7.7.56</ecNumber>
    </recommendedName>
    <alternativeName>
        <fullName evidence="1">tRNA nucleotidyltransferase</fullName>
    </alternativeName>
</protein>